<proteinExistence type="inferred from homology"/>
<reference key="1">
    <citation type="submission" date="2007-02" db="EMBL/GenBank/DDBJ databases">
        <title>Complete sequence of Mycobacterium sp. JLS.</title>
        <authorList>
            <consortium name="US DOE Joint Genome Institute"/>
            <person name="Copeland A."/>
            <person name="Lucas S."/>
            <person name="Lapidus A."/>
            <person name="Barry K."/>
            <person name="Detter J.C."/>
            <person name="Glavina del Rio T."/>
            <person name="Hammon N."/>
            <person name="Israni S."/>
            <person name="Dalin E."/>
            <person name="Tice H."/>
            <person name="Pitluck S."/>
            <person name="Chain P."/>
            <person name="Malfatti S."/>
            <person name="Shin M."/>
            <person name="Vergez L."/>
            <person name="Schmutz J."/>
            <person name="Larimer F."/>
            <person name="Land M."/>
            <person name="Hauser L."/>
            <person name="Kyrpides N."/>
            <person name="Mikhailova N."/>
            <person name="Miller C.D."/>
            <person name="Anderson A.J."/>
            <person name="Sims R.C."/>
            <person name="Richardson P."/>
        </authorList>
    </citation>
    <scope>NUCLEOTIDE SEQUENCE [LARGE SCALE GENOMIC DNA]</scope>
    <source>
        <strain>JLS</strain>
    </source>
</reference>
<keyword id="KW-0067">ATP-binding</keyword>
<keyword id="KW-0963">Cytoplasm</keyword>
<keyword id="KW-0460">Magnesium</keyword>
<keyword id="KW-0479">Metal-binding</keyword>
<keyword id="KW-0547">Nucleotide-binding</keyword>
<keyword id="KW-0554">One-carbon metabolism</keyword>
<keyword id="KW-0630">Potassium</keyword>
<keyword id="KW-0808">Transferase</keyword>
<name>METK_MYCSJ</name>
<gene>
    <name evidence="1" type="primary">metK</name>
    <name type="ordered locus">Mjls_2414</name>
</gene>
<sequence length="402" mass="42979">MSKGRLFTSESVTEGHPDKICDAISDSVLDSLLAQDPRSRVAVETLVTTGQVHVVGEVTTSAKEAFADITNTVRHRILEVGYDSSDKGFDGTTCGVNIGIGAQSPDIAQGVDTAHETRVEGAGDPLDLQGAGDQGLMFGYAIKDTPELMPLPIALAHRLARRLTEVRKNGVLDYLRPDGKTQVTVQYDGVTPVRLDTVVLSTQHAEGIDLEGTLTPDIREKVVNTVLSDLNHDSMDTSDFRLLVNPTGKFVLGGPMGDAGLTGRKIIVDTYGGWARHGGGAFSGKDPSKVDRSAAYAMRWVAKNVVAAGLADRVEVQVAYAIGKAAPVGLFVETFGTETVDPAKIEKAITEVFDLRPGAIVRDLDLLRPIYAPTAAYGHFGRTDIDLPWERTDKADALKTAV</sequence>
<comment type="function">
    <text evidence="1">Catalyzes the formation of S-adenosylmethionine (AdoMet) from methionine and ATP. The overall synthetic reaction is composed of two sequential steps, AdoMet formation and the subsequent tripolyphosphate hydrolysis which occurs prior to release of AdoMet from the enzyme.</text>
</comment>
<comment type="catalytic activity">
    <reaction evidence="1">
        <text>L-methionine + ATP + H2O = S-adenosyl-L-methionine + phosphate + diphosphate</text>
        <dbReference type="Rhea" id="RHEA:21080"/>
        <dbReference type="ChEBI" id="CHEBI:15377"/>
        <dbReference type="ChEBI" id="CHEBI:30616"/>
        <dbReference type="ChEBI" id="CHEBI:33019"/>
        <dbReference type="ChEBI" id="CHEBI:43474"/>
        <dbReference type="ChEBI" id="CHEBI:57844"/>
        <dbReference type="ChEBI" id="CHEBI:59789"/>
        <dbReference type="EC" id="2.5.1.6"/>
    </reaction>
</comment>
<comment type="cofactor">
    <cofactor evidence="1">
        <name>Mg(2+)</name>
        <dbReference type="ChEBI" id="CHEBI:18420"/>
    </cofactor>
    <text evidence="1">Binds 2 divalent ions per subunit.</text>
</comment>
<comment type="cofactor">
    <cofactor evidence="1">
        <name>K(+)</name>
        <dbReference type="ChEBI" id="CHEBI:29103"/>
    </cofactor>
    <text evidence="1">Binds 1 potassium ion per subunit.</text>
</comment>
<comment type="pathway">
    <text evidence="1">Amino-acid biosynthesis; S-adenosyl-L-methionine biosynthesis; S-adenosyl-L-methionine from L-methionine: step 1/1.</text>
</comment>
<comment type="subunit">
    <text evidence="1">Homotetramer; dimer of dimers.</text>
</comment>
<comment type="subcellular location">
    <subcellularLocation>
        <location evidence="1">Cytoplasm</location>
    </subcellularLocation>
</comment>
<comment type="similarity">
    <text evidence="1">Belongs to the AdoMet synthase family.</text>
</comment>
<dbReference type="EC" id="2.5.1.6" evidence="1"/>
<dbReference type="EMBL" id="CP000580">
    <property type="protein sequence ID" value="ABN98198.1"/>
    <property type="molecule type" value="Genomic_DNA"/>
</dbReference>
<dbReference type="SMR" id="A3PZ71"/>
<dbReference type="KEGG" id="mjl:Mjls_2414"/>
<dbReference type="HOGENOM" id="CLU_041802_1_1_11"/>
<dbReference type="BioCyc" id="MSP164757:G1G8C-2433-MONOMER"/>
<dbReference type="UniPathway" id="UPA00315">
    <property type="reaction ID" value="UER00080"/>
</dbReference>
<dbReference type="GO" id="GO:0005737">
    <property type="term" value="C:cytoplasm"/>
    <property type="evidence" value="ECO:0007669"/>
    <property type="project" value="UniProtKB-SubCell"/>
</dbReference>
<dbReference type="GO" id="GO:0005524">
    <property type="term" value="F:ATP binding"/>
    <property type="evidence" value="ECO:0007669"/>
    <property type="project" value="UniProtKB-UniRule"/>
</dbReference>
<dbReference type="GO" id="GO:0000287">
    <property type="term" value="F:magnesium ion binding"/>
    <property type="evidence" value="ECO:0007669"/>
    <property type="project" value="UniProtKB-UniRule"/>
</dbReference>
<dbReference type="GO" id="GO:0004478">
    <property type="term" value="F:methionine adenosyltransferase activity"/>
    <property type="evidence" value="ECO:0007669"/>
    <property type="project" value="UniProtKB-UniRule"/>
</dbReference>
<dbReference type="GO" id="GO:0006730">
    <property type="term" value="P:one-carbon metabolic process"/>
    <property type="evidence" value="ECO:0007669"/>
    <property type="project" value="UniProtKB-KW"/>
</dbReference>
<dbReference type="GO" id="GO:0006556">
    <property type="term" value="P:S-adenosylmethionine biosynthetic process"/>
    <property type="evidence" value="ECO:0007669"/>
    <property type="project" value="UniProtKB-UniRule"/>
</dbReference>
<dbReference type="CDD" id="cd18079">
    <property type="entry name" value="S-AdoMet_synt"/>
    <property type="match status" value="1"/>
</dbReference>
<dbReference type="FunFam" id="3.30.300.10:FF:000006">
    <property type="entry name" value="S-adenosylmethionine synthase"/>
    <property type="match status" value="1"/>
</dbReference>
<dbReference type="Gene3D" id="3.30.300.10">
    <property type="match status" value="3"/>
</dbReference>
<dbReference type="HAMAP" id="MF_00086">
    <property type="entry name" value="S_AdoMet_synth1"/>
    <property type="match status" value="1"/>
</dbReference>
<dbReference type="InterPro" id="IPR022631">
    <property type="entry name" value="ADOMET_SYNTHASE_CS"/>
</dbReference>
<dbReference type="InterPro" id="IPR022630">
    <property type="entry name" value="S-AdoMet_synt_C"/>
</dbReference>
<dbReference type="InterPro" id="IPR022629">
    <property type="entry name" value="S-AdoMet_synt_central"/>
</dbReference>
<dbReference type="InterPro" id="IPR022628">
    <property type="entry name" value="S-AdoMet_synt_N"/>
</dbReference>
<dbReference type="InterPro" id="IPR002133">
    <property type="entry name" value="S-AdoMet_synthetase"/>
</dbReference>
<dbReference type="InterPro" id="IPR022636">
    <property type="entry name" value="S-AdoMet_synthetase_sfam"/>
</dbReference>
<dbReference type="NCBIfam" id="TIGR01034">
    <property type="entry name" value="metK"/>
    <property type="match status" value="1"/>
</dbReference>
<dbReference type="PANTHER" id="PTHR11964">
    <property type="entry name" value="S-ADENOSYLMETHIONINE SYNTHETASE"/>
    <property type="match status" value="1"/>
</dbReference>
<dbReference type="Pfam" id="PF02773">
    <property type="entry name" value="S-AdoMet_synt_C"/>
    <property type="match status" value="1"/>
</dbReference>
<dbReference type="Pfam" id="PF02772">
    <property type="entry name" value="S-AdoMet_synt_M"/>
    <property type="match status" value="1"/>
</dbReference>
<dbReference type="Pfam" id="PF00438">
    <property type="entry name" value="S-AdoMet_synt_N"/>
    <property type="match status" value="1"/>
</dbReference>
<dbReference type="PIRSF" id="PIRSF000497">
    <property type="entry name" value="MAT"/>
    <property type="match status" value="1"/>
</dbReference>
<dbReference type="SUPFAM" id="SSF55973">
    <property type="entry name" value="S-adenosylmethionine synthetase"/>
    <property type="match status" value="3"/>
</dbReference>
<dbReference type="PROSITE" id="PS00376">
    <property type="entry name" value="ADOMET_SYNTHASE_1"/>
    <property type="match status" value="1"/>
</dbReference>
<dbReference type="PROSITE" id="PS00377">
    <property type="entry name" value="ADOMET_SYNTHASE_2"/>
    <property type="match status" value="1"/>
</dbReference>
<accession>A3PZ71</accession>
<feature type="chain" id="PRO_0000302942" description="S-adenosylmethionine synthase">
    <location>
        <begin position="1"/>
        <end position="402"/>
    </location>
</feature>
<feature type="region of interest" description="Flexible loop" evidence="1">
    <location>
        <begin position="103"/>
        <end position="113"/>
    </location>
</feature>
<feature type="binding site" description="in other chain" evidence="1">
    <location>
        <position position="16"/>
    </location>
    <ligand>
        <name>ATP</name>
        <dbReference type="ChEBI" id="CHEBI:30616"/>
        <note>ligand shared between two neighboring subunits</note>
    </ligand>
</feature>
<feature type="binding site" evidence="1">
    <location>
        <position position="18"/>
    </location>
    <ligand>
        <name>Mg(2+)</name>
        <dbReference type="ChEBI" id="CHEBI:18420"/>
    </ligand>
</feature>
<feature type="binding site" evidence="1">
    <location>
        <position position="44"/>
    </location>
    <ligand>
        <name>K(+)</name>
        <dbReference type="ChEBI" id="CHEBI:29103"/>
    </ligand>
</feature>
<feature type="binding site" description="in other chain" evidence="1">
    <location>
        <position position="57"/>
    </location>
    <ligand>
        <name>L-methionine</name>
        <dbReference type="ChEBI" id="CHEBI:57844"/>
        <note>ligand shared between two neighboring subunits</note>
    </ligand>
</feature>
<feature type="binding site" description="in other chain" evidence="1">
    <location>
        <position position="103"/>
    </location>
    <ligand>
        <name>L-methionine</name>
        <dbReference type="ChEBI" id="CHEBI:57844"/>
        <note>ligand shared between two neighboring subunits</note>
    </ligand>
</feature>
<feature type="binding site" description="in other chain" evidence="1">
    <location>
        <begin position="178"/>
        <end position="180"/>
    </location>
    <ligand>
        <name>ATP</name>
        <dbReference type="ChEBI" id="CHEBI:30616"/>
        <note>ligand shared between two neighboring subunits</note>
    </ligand>
</feature>
<feature type="binding site" description="in other chain" evidence="1">
    <location>
        <begin position="249"/>
        <end position="250"/>
    </location>
    <ligand>
        <name>ATP</name>
        <dbReference type="ChEBI" id="CHEBI:30616"/>
        <note>ligand shared between two neighboring subunits</note>
    </ligand>
</feature>
<feature type="binding site" evidence="1">
    <location>
        <position position="258"/>
    </location>
    <ligand>
        <name>ATP</name>
        <dbReference type="ChEBI" id="CHEBI:30616"/>
        <note>ligand shared between two neighboring subunits</note>
    </ligand>
</feature>
<feature type="binding site" evidence="1">
    <location>
        <position position="258"/>
    </location>
    <ligand>
        <name>L-methionine</name>
        <dbReference type="ChEBI" id="CHEBI:57844"/>
        <note>ligand shared between two neighboring subunits</note>
    </ligand>
</feature>
<feature type="binding site" description="in other chain" evidence="1">
    <location>
        <begin position="264"/>
        <end position="265"/>
    </location>
    <ligand>
        <name>ATP</name>
        <dbReference type="ChEBI" id="CHEBI:30616"/>
        <note>ligand shared between two neighboring subunits</note>
    </ligand>
</feature>
<feature type="binding site" evidence="1">
    <location>
        <position position="281"/>
    </location>
    <ligand>
        <name>ATP</name>
        <dbReference type="ChEBI" id="CHEBI:30616"/>
        <note>ligand shared between two neighboring subunits</note>
    </ligand>
</feature>
<feature type="binding site" evidence="1">
    <location>
        <position position="285"/>
    </location>
    <ligand>
        <name>ATP</name>
        <dbReference type="ChEBI" id="CHEBI:30616"/>
        <note>ligand shared between two neighboring subunits</note>
    </ligand>
</feature>
<feature type="binding site" description="in other chain" evidence="1">
    <location>
        <position position="289"/>
    </location>
    <ligand>
        <name>L-methionine</name>
        <dbReference type="ChEBI" id="CHEBI:57844"/>
        <note>ligand shared between two neighboring subunits</note>
    </ligand>
</feature>
<organism>
    <name type="scientific">Mycobacterium sp. (strain JLS)</name>
    <dbReference type="NCBI Taxonomy" id="164757"/>
    <lineage>
        <taxon>Bacteria</taxon>
        <taxon>Bacillati</taxon>
        <taxon>Actinomycetota</taxon>
        <taxon>Actinomycetes</taxon>
        <taxon>Mycobacteriales</taxon>
        <taxon>Mycobacteriaceae</taxon>
        <taxon>Mycobacterium</taxon>
    </lineage>
</organism>
<evidence type="ECO:0000255" key="1">
    <source>
        <dbReference type="HAMAP-Rule" id="MF_00086"/>
    </source>
</evidence>
<protein>
    <recommendedName>
        <fullName evidence="1">S-adenosylmethionine synthase</fullName>
        <shortName evidence="1">AdoMet synthase</shortName>
        <ecNumber evidence="1">2.5.1.6</ecNumber>
    </recommendedName>
    <alternativeName>
        <fullName evidence="1">MAT</fullName>
    </alternativeName>
    <alternativeName>
        <fullName evidence="1">Methionine adenosyltransferase</fullName>
    </alternativeName>
</protein>